<protein>
    <recommendedName>
        <fullName evidence="5">Chitooligosaccharide oxidase</fullName>
        <ecNumber evidence="4">1.1.3.-</ecNumber>
    </recommendedName>
</protein>
<comment type="function">
    <text evidence="4">Catalyzes the selective oxidation of C1 hydroxyl moieties on chitooligosaccharides with concomitant reduction of molecular oxygen to hydrogen peroxide. This results in the formation of the corresponding lactones, which typically undergo spontaneous hydrolysis. Chitooligosaccharides are homo- or heterooligomers of N-acetylglucosamine (GlcNAc) and D-glucosamine which are linked through beta-1,4-glycosidic bonds. For optimal substrate binding at least 2 GlcNAc units are needed, and chitooligosaccharide oxidase is most efficient on chitobiose, chitotriose and chitotetraose.</text>
</comment>
<comment type="catalytic activity">
    <reaction evidence="4">
        <text>N,N'-diacetylchitobiose + O2 = N,N'-diacetylchitobiono-1,5-lactone + H2O2</text>
        <dbReference type="Rhea" id="RHEA:59544"/>
        <dbReference type="ChEBI" id="CHEBI:15379"/>
        <dbReference type="ChEBI" id="CHEBI:16240"/>
        <dbReference type="ChEBI" id="CHEBI:28681"/>
        <dbReference type="ChEBI" id="CHEBI:143145"/>
    </reaction>
</comment>
<comment type="catalytic activity">
    <reaction evidence="4">
        <text>N,N',N''-triacetylchitotriose + O2 = N,N',N''-triacetylchitotriono-1,5-lactone + H2O2</text>
        <dbReference type="Rhea" id="RHEA:59548"/>
        <dbReference type="ChEBI" id="CHEBI:15379"/>
        <dbReference type="ChEBI" id="CHEBI:16240"/>
        <dbReference type="ChEBI" id="CHEBI:143141"/>
        <dbReference type="ChEBI" id="CHEBI:143144"/>
    </reaction>
</comment>
<comment type="catalytic activity">
    <reaction evidence="4">
        <text>N,N',N'',N'''-tetraacetylchitotetraose + O2 = N,N',N'',N'''-tetraacetylchitotetraono-1,5-lactone + H2O2</text>
        <dbReference type="Rhea" id="RHEA:59552"/>
        <dbReference type="ChEBI" id="CHEBI:15379"/>
        <dbReference type="ChEBI" id="CHEBI:16240"/>
        <dbReference type="ChEBI" id="CHEBI:143142"/>
        <dbReference type="ChEBI" id="CHEBI:143143"/>
    </reaction>
</comment>
<comment type="cofactor">
    <cofactor evidence="4">
        <name>FAD</name>
        <dbReference type="ChEBI" id="CHEBI:57692"/>
    </cofactor>
    <text evidence="4">Binds 1 FAD per subunit in a bicovalent manner.</text>
</comment>
<comment type="biophysicochemical properties">
    <kinetics>
        <KM evidence="4">6.3 mM for GlcNAc</KM>
        <KM evidence="4">0.3 mM for N,N'-diacetylchitobiose</KM>
        <KM evidence="4">0.26 mM for N,N',N''-triacetylchitotriose</KM>
        <KM evidence="4">0.25 mM for N,N',N'',N'''-tetraacetylchitotetraose</KM>
    </kinetics>
</comment>
<comment type="subcellular location">
    <subcellularLocation>
        <location evidence="1">Secreted</location>
    </subcellularLocation>
</comment>
<comment type="PTM">
    <text evidence="1">The FAD cofactor is bound via a bicovalent 6-S-cysteinyl, 8alpha-N1-histidyl FAD linkage.</text>
</comment>
<comment type="similarity">
    <text evidence="6">Belongs to the oxygen-dependent FAD-linked oxidoreductase family.</text>
</comment>
<feature type="signal peptide" evidence="2">
    <location>
        <begin position="1"/>
        <end position="19"/>
    </location>
</feature>
<feature type="chain" id="PRO_5010968455" description="Chitooligosaccharide oxidase">
    <location>
        <begin position="20"/>
        <end position="492"/>
    </location>
</feature>
<feature type="domain" description="FAD-binding PCMH-type" evidence="3">
    <location>
        <begin position="57"/>
        <end position="229"/>
    </location>
</feature>
<feature type="cross-link" description="6-(S-cysteinyl)-8alpha-(pros-histidyl)-FAD (His-Cys)" evidence="1">
    <location>
        <begin position="94"/>
        <end position="154"/>
    </location>
</feature>
<feature type="mutagenesis site" description="Changes substrate affinity from N-acetylated towards non-acetylated oligosaccharides." evidence="4">
    <original>Q</original>
    <variation>R</variation>
    <location>
        <position position="268"/>
    </location>
</feature>
<name>CHITO_GIBZE</name>
<gene>
    <name evidence="5" type="primary">chitO</name>
    <name type="ORF">FGRAMPH1_01T20975</name>
</gene>
<organism>
    <name type="scientific">Gibberella zeae (strain ATCC MYA-4620 / CBS 123657 / FGSC 9075 / NRRL 31084 / PH-1)</name>
    <name type="common">Wheat head blight fungus</name>
    <name type="synonym">Fusarium graminearum</name>
    <dbReference type="NCBI Taxonomy" id="229533"/>
    <lineage>
        <taxon>Eukaryota</taxon>
        <taxon>Fungi</taxon>
        <taxon>Dikarya</taxon>
        <taxon>Ascomycota</taxon>
        <taxon>Pezizomycotina</taxon>
        <taxon>Sordariomycetes</taxon>
        <taxon>Hypocreomycetidae</taxon>
        <taxon>Hypocreales</taxon>
        <taxon>Nectriaceae</taxon>
        <taxon>Fusarium</taxon>
    </lineage>
</organism>
<keyword id="KW-0002">3D-structure</keyword>
<keyword id="KW-0274">FAD</keyword>
<keyword id="KW-0285">Flavoprotein</keyword>
<keyword id="KW-0560">Oxidoreductase</keyword>
<keyword id="KW-1185">Reference proteome</keyword>
<keyword id="KW-0964">Secreted</keyword>
<keyword id="KW-0732">Signal</keyword>
<dbReference type="EC" id="1.1.3.-" evidence="4"/>
<dbReference type="EMBL" id="HG970334">
    <property type="protein sequence ID" value="CEF87481.1"/>
    <property type="molecule type" value="Genomic_DNA"/>
</dbReference>
<dbReference type="RefSeq" id="XP_011325372.1">
    <property type="nucleotide sequence ID" value="XM_011327070.1"/>
</dbReference>
<dbReference type="PDB" id="6Y0R">
    <property type="method" value="X-ray"/>
    <property type="resolution" value="1.61 A"/>
    <property type="chains" value="AAA=1-492"/>
</dbReference>
<dbReference type="PDBsum" id="6Y0R"/>
<dbReference type="SMR" id="I1S2K2"/>
<dbReference type="STRING" id="229533.I1S2K2"/>
<dbReference type="KEGG" id="fgr:FGSG_10998"/>
<dbReference type="VEuPathDB" id="FungiDB:FGRAMPH1_01G20975"/>
<dbReference type="eggNOG" id="ENOG502QVGN">
    <property type="taxonomic scope" value="Eukaryota"/>
</dbReference>
<dbReference type="HOGENOM" id="CLU_018354_10_1_1"/>
<dbReference type="InParanoid" id="I1S2K2"/>
<dbReference type="OrthoDB" id="36891at110618"/>
<dbReference type="Proteomes" id="UP000070720">
    <property type="component" value="Chromosome 3"/>
</dbReference>
<dbReference type="GO" id="GO:0005576">
    <property type="term" value="C:extracellular region"/>
    <property type="evidence" value="ECO:0007669"/>
    <property type="project" value="UniProtKB-SubCell"/>
</dbReference>
<dbReference type="GO" id="GO:0071949">
    <property type="term" value="F:FAD binding"/>
    <property type="evidence" value="ECO:0007669"/>
    <property type="project" value="InterPro"/>
</dbReference>
<dbReference type="GO" id="GO:0016491">
    <property type="term" value="F:oxidoreductase activity"/>
    <property type="evidence" value="ECO:0007669"/>
    <property type="project" value="UniProtKB-KW"/>
</dbReference>
<dbReference type="Gene3D" id="3.30.465.10">
    <property type="match status" value="1"/>
</dbReference>
<dbReference type="Gene3D" id="3.40.462.20">
    <property type="match status" value="1"/>
</dbReference>
<dbReference type="InterPro" id="IPR012951">
    <property type="entry name" value="BBE"/>
</dbReference>
<dbReference type="InterPro" id="IPR016166">
    <property type="entry name" value="FAD-bd_PCMH"/>
</dbReference>
<dbReference type="InterPro" id="IPR036318">
    <property type="entry name" value="FAD-bd_PCMH-like_sf"/>
</dbReference>
<dbReference type="InterPro" id="IPR016169">
    <property type="entry name" value="FAD-bd_PCMH_sub2"/>
</dbReference>
<dbReference type="InterPro" id="IPR050416">
    <property type="entry name" value="FAD-linked_Oxidoreductase"/>
</dbReference>
<dbReference type="InterPro" id="IPR006094">
    <property type="entry name" value="Oxid_FAD_bind_N"/>
</dbReference>
<dbReference type="PANTHER" id="PTHR42973">
    <property type="entry name" value="BINDING OXIDOREDUCTASE, PUTATIVE (AFU_ORTHOLOGUE AFUA_1G17690)-RELATED"/>
    <property type="match status" value="1"/>
</dbReference>
<dbReference type="PANTHER" id="PTHR42973:SF39">
    <property type="entry name" value="FAD-BINDING PCMH-TYPE DOMAIN-CONTAINING PROTEIN"/>
    <property type="match status" value="1"/>
</dbReference>
<dbReference type="Pfam" id="PF08031">
    <property type="entry name" value="BBE"/>
    <property type="match status" value="1"/>
</dbReference>
<dbReference type="Pfam" id="PF01565">
    <property type="entry name" value="FAD_binding_4"/>
    <property type="match status" value="1"/>
</dbReference>
<dbReference type="SUPFAM" id="SSF56176">
    <property type="entry name" value="FAD-binding/transporter-associated domain-like"/>
    <property type="match status" value="1"/>
</dbReference>
<dbReference type="PROSITE" id="PS51387">
    <property type="entry name" value="FAD_PCMH"/>
    <property type="match status" value="1"/>
</dbReference>
<reference key="1">
    <citation type="journal article" date="2007" name="Science">
        <title>The Fusarium graminearum genome reveals a link between localized polymorphism and pathogen specialization.</title>
        <authorList>
            <person name="Cuomo C.A."/>
            <person name="Gueldener U."/>
            <person name="Xu J.-R."/>
            <person name="Trail F."/>
            <person name="Turgeon B.G."/>
            <person name="Di Pietro A."/>
            <person name="Walton J.D."/>
            <person name="Ma L.-J."/>
            <person name="Baker S.E."/>
            <person name="Rep M."/>
            <person name="Adam G."/>
            <person name="Antoniw J."/>
            <person name="Baldwin T."/>
            <person name="Calvo S.E."/>
            <person name="Chang Y.-L."/>
            <person name="DeCaprio D."/>
            <person name="Gale L.R."/>
            <person name="Gnerre S."/>
            <person name="Goswami R.S."/>
            <person name="Hammond-Kosack K."/>
            <person name="Harris L.J."/>
            <person name="Hilburn K."/>
            <person name="Kennell J.C."/>
            <person name="Kroken S."/>
            <person name="Magnuson J.K."/>
            <person name="Mannhaupt G."/>
            <person name="Mauceli E.W."/>
            <person name="Mewes H.-W."/>
            <person name="Mitterbauer R."/>
            <person name="Muehlbauer G."/>
            <person name="Muensterkoetter M."/>
            <person name="Nelson D."/>
            <person name="O'Donnell K."/>
            <person name="Ouellet T."/>
            <person name="Qi W."/>
            <person name="Quesneville H."/>
            <person name="Roncero M.I.G."/>
            <person name="Seong K.-Y."/>
            <person name="Tetko I.V."/>
            <person name="Urban M."/>
            <person name="Waalwijk C."/>
            <person name="Ward T.J."/>
            <person name="Yao J."/>
            <person name="Birren B.W."/>
            <person name="Kistler H.C."/>
        </authorList>
    </citation>
    <scope>NUCLEOTIDE SEQUENCE [LARGE SCALE GENOMIC DNA]</scope>
    <source>
        <strain>ATCC MYA-4620 / CBS 123657 / FGSC 9075 / NRRL 31084 / PH-1</strain>
    </source>
</reference>
<reference key="2">
    <citation type="journal article" date="2010" name="Nature">
        <title>Comparative genomics reveals mobile pathogenicity chromosomes in Fusarium.</title>
        <authorList>
            <person name="Ma L.-J."/>
            <person name="van der Does H.C."/>
            <person name="Borkovich K.A."/>
            <person name="Coleman J.J."/>
            <person name="Daboussi M.-J."/>
            <person name="Di Pietro A."/>
            <person name="Dufresne M."/>
            <person name="Freitag M."/>
            <person name="Grabherr M."/>
            <person name="Henrissat B."/>
            <person name="Houterman P.M."/>
            <person name="Kang S."/>
            <person name="Shim W.-B."/>
            <person name="Woloshuk C."/>
            <person name="Xie X."/>
            <person name="Xu J.-R."/>
            <person name="Antoniw J."/>
            <person name="Baker S.E."/>
            <person name="Bluhm B.H."/>
            <person name="Breakspear A."/>
            <person name="Brown D.W."/>
            <person name="Butchko R.A.E."/>
            <person name="Chapman S."/>
            <person name="Coulson R."/>
            <person name="Coutinho P.M."/>
            <person name="Danchin E.G.J."/>
            <person name="Diener A."/>
            <person name="Gale L.R."/>
            <person name="Gardiner D.M."/>
            <person name="Goff S."/>
            <person name="Hammond-Kosack K.E."/>
            <person name="Hilburn K."/>
            <person name="Hua-Van A."/>
            <person name="Jonkers W."/>
            <person name="Kazan K."/>
            <person name="Kodira C.D."/>
            <person name="Koehrsen M."/>
            <person name="Kumar L."/>
            <person name="Lee Y.-H."/>
            <person name="Li L."/>
            <person name="Manners J.M."/>
            <person name="Miranda-Saavedra D."/>
            <person name="Mukherjee M."/>
            <person name="Park G."/>
            <person name="Park J."/>
            <person name="Park S.-Y."/>
            <person name="Proctor R.H."/>
            <person name="Regev A."/>
            <person name="Ruiz-Roldan M.C."/>
            <person name="Sain D."/>
            <person name="Sakthikumar S."/>
            <person name="Sykes S."/>
            <person name="Schwartz D.C."/>
            <person name="Turgeon B.G."/>
            <person name="Wapinski I."/>
            <person name="Yoder O."/>
            <person name="Young S."/>
            <person name="Zeng Q."/>
            <person name="Zhou S."/>
            <person name="Galagan J."/>
            <person name="Cuomo C.A."/>
            <person name="Kistler H.C."/>
            <person name="Rep M."/>
        </authorList>
    </citation>
    <scope>GENOME REANNOTATION</scope>
    <source>
        <strain>ATCC MYA-4620 / CBS 123657 / FGSC 9075 / NRRL 31084 / PH-1</strain>
    </source>
</reference>
<reference key="3">
    <citation type="journal article" date="2015" name="BMC Genomics">
        <title>The completed genome sequence of the pathogenic ascomycete fungus Fusarium graminearum.</title>
        <authorList>
            <person name="King R."/>
            <person name="Urban M."/>
            <person name="Hammond-Kosack M.C.U."/>
            <person name="Hassani-Pak K."/>
            <person name="Hammond-Kosack K.E."/>
        </authorList>
    </citation>
    <scope>NUCLEOTIDE SEQUENCE [LARGE SCALE GENOMIC DNA]</scope>
    <source>
        <strain>ATCC MYA-4620 / CBS 123657 / FGSC 9075 / NRRL 31084 / PH-1</strain>
    </source>
</reference>
<reference key="4">
    <citation type="journal article" date="2007" name="FEBS Lett.">
        <title>Changing the substrate specificity of a chitooligosaccharide oxidase from Fusarium graminearum by model-inspired site-directed mutagenesis.</title>
        <authorList>
            <person name="Heuts D.P.H.M."/>
            <person name="Janssen D.B."/>
            <person name="Fraaije M.W."/>
        </authorList>
    </citation>
    <scope>FUNCTION</scope>
    <scope>CATALYTIC ACTIVITY</scope>
    <scope>BIOPHYSICOCHEMICAL PROPERTIES</scope>
    <scope>COFACTOR</scope>
    <scope>MUTAGENESIS OF GLN-268</scope>
    <source>
        <strain>ATCC MYA-4620 / CBS 123657 / FGSC 9075 / NRRL 31084 / PH-1</strain>
    </source>
</reference>
<evidence type="ECO:0000250" key="1">
    <source>
        <dbReference type="UniProtKB" id="Q6PW77"/>
    </source>
</evidence>
<evidence type="ECO:0000255" key="2"/>
<evidence type="ECO:0000255" key="3">
    <source>
        <dbReference type="PROSITE-ProRule" id="PRU00718"/>
    </source>
</evidence>
<evidence type="ECO:0000269" key="4">
    <source>
    </source>
</evidence>
<evidence type="ECO:0000303" key="5">
    <source>
    </source>
</evidence>
<evidence type="ECO:0000305" key="6"/>
<sequence length="492" mass="52612">MHFNTLTCVLVGLVAHTSAVPTKREAVNSCLTQAKVPTDAQGSQSWKEDGTAYNLRLPFEPAAIAVPTTVAQVSAAVECGAKHGVAISAKSGGHSYTSLGFGGEDGHLMIELDRMYSVKLAKDGTAKIQPGARLGHVATELWNQGKRALAHGTCPGVGLGGHALHGGYGMVARKHGLTLDLMIGATVVLPTGKVVHCSKTENSDLFWGIRGAGANFGVVVELEFQTFAAPEKITYFDIGLNWDQNTAPQGLYDFQEFGKGMPAEITMQMGVSKNGYSVDGAYIGDEASLRKALQPLVQKFGGVQVTATTVDWMGLVTHFAGAGVNVNPTSASYDAHDNFYASSLAAPALTLAEFKSFVNFVSTTGKSSSHSWWLQMDITGGTYSAVSKPKPSDTAYVHRDTLLLFQFYDSVAATAQYPSDGFNLIKGLRQSISSSLKAGTWGMYANYPDSQIKNDRATEMYWGSNVAKLEAVKAKYDPKNLFRNPQSIKPKA</sequence>
<proteinExistence type="evidence at protein level"/>
<accession>I1S2K2</accession>
<accession>A0A098E050</accession>